<sequence length="101" mass="11337">MMFEHVLFLSVYLFSIGIYGLITSRNMVRALICLELILNSINLNLVTFSDLFDSRQLKGDIFAIFVIALAAAEAAIGLSILSSIHRNRKSTRINQSNFLNN</sequence>
<reference key="1">
    <citation type="journal article" date="2004" name="Curr. Genet.">
        <title>Structural features and transcript-editing analysis of sugarcane (Saccharum officinarum L.) chloroplast genome.</title>
        <authorList>
            <person name="Calsa T. Jr."/>
            <person name="Carraro D.M."/>
            <person name="Benatti M.R."/>
            <person name="Barbosa A.C."/>
            <person name="Kitajima J.P."/>
            <person name="Carrer H."/>
        </authorList>
    </citation>
    <scope>NUCLEOTIDE SEQUENCE [LARGE SCALE GENOMIC DNA]</scope>
    <source>
        <strain>cv. SP-80-3280</strain>
    </source>
</reference>
<protein>
    <recommendedName>
        <fullName evidence="1">NAD(P)H-quinone oxidoreductase subunit 4L, chloroplastic</fullName>
        <ecNumber evidence="1">7.1.1.-</ecNumber>
    </recommendedName>
    <alternativeName>
        <fullName evidence="1">NAD(P)H dehydrogenase subunit 4L</fullName>
    </alternativeName>
    <alternativeName>
        <fullName evidence="1">NADH-plastoquinone oxidoreductase subunit 4L</fullName>
    </alternativeName>
</protein>
<dbReference type="EC" id="7.1.1.-" evidence="1"/>
<dbReference type="EMBL" id="AE009947">
    <property type="protein sequence ID" value="AAT44655.1"/>
    <property type="molecule type" value="Genomic_DNA"/>
</dbReference>
<dbReference type="SMR" id="Q6L3D8"/>
<dbReference type="GO" id="GO:0009535">
    <property type="term" value="C:chloroplast thylakoid membrane"/>
    <property type="evidence" value="ECO:0007669"/>
    <property type="project" value="UniProtKB-SubCell"/>
</dbReference>
<dbReference type="GO" id="GO:0030964">
    <property type="term" value="C:NADH dehydrogenase complex"/>
    <property type="evidence" value="ECO:0007669"/>
    <property type="project" value="TreeGrafter"/>
</dbReference>
<dbReference type="GO" id="GO:0016655">
    <property type="term" value="F:oxidoreductase activity, acting on NAD(P)H, quinone or similar compound as acceptor"/>
    <property type="evidence" value="ECO:0007669"/>
    <property type="project" value="UniProtKB-UniRule"/>
</dbReference>
<dbReference type="GO" id="GO:0048038">
    <property type="term" value="F:quinone binding"/>
    <property type="evidence" value="ECO:0007669"/>
    <property type="project" value="UniProtKB-KW"/>
</dbReference>
<dbReference type="GO" id="GO:0042773">
    <property type="term" value="P:ATP synthesis coupled electron transport"/>
    <property type="evidence" value="ECO:0007669"/>
    <property type="project" value="InterPro"/>
</dbReference>
<dbReference type="GO" id="GO:0019684">
    <property type="term" value="P:photosynthesis, light reaction"/>
    <property type="evidence" value="ECO:0007669"/>
    <property type="project" value="UniProtKB-UniRule"/>
</dbReference>
<dbReference type="FunFam" id="1.10.287.3510:FF:000001">
    <property type="entry name" value="NADH-quinone oxidoreductase subunit K"/>
    <property type="match status" value="1"/>
</dbReference>
<dbReference type="Gene3D" id="1.10.287.3510">
    <property type="match status" value="1"/>
</dbReference>
<dbReference type="HAMAP" id="MF_01456">
    <property type="entry name" value="NDH1_NuoK"/>
    <property type="match status" value="1"/>
</dbReference>
<dbReference type="InterPro" id="IPR001133">
    <property type="entry name" value="NADH_UbQ_OxRdtase_chain4L/K"/>
</dbReference>
<dbReference type="InterPro" id="IPR039428">
    <property type="entry name" value="NUOK/Mnh_C1-like"/>
</dbReference>
<dbReference type="NCBIfam" id="NF004320">
    <property type="entry name" value="PRK05715.1-2"/>
    <property type="match status" value="1"/>
</dbReference>
<dbReference type="PANTHER" id="PTHR11434:SF16">
    <property type="entry name" value="NADH-UBIQUINONE OXIDOREDUCTASE CHAIN 4L"/>
    <property type="match status" value="1"/>
</dbReference>
<dbReference type="PANTHER" id="PTHR11434">
    <property type="entry name" value="NADH-UBIQUINONE OXIDOREDUCTASE SUBUNIT ND4L"/>
    <property type="match status" value="1"/>
</dbReference>
<dbReference type="Pfam" id="PF00420">
    <property type="entry name" value="Oxidored_q2"/>
    <property type="match status" value="1"/>
</dbReference>
<proteinExistence type="inferred from homology"/>
<comment type="function">
    <text evidence="1">NDH shuttles electrons from NAD(P)H:plastoquinone, via FMN and iron-sulfur (Fe-S) centers, to quinones in the photosynthetic chain and possibly in a chloroplast respiratory chain. The immediate electron acceptor for the enzyme in this species is believed to be plastoquinone. Couples the redox reaction to proton translocation, and thus conserves the redox energy in a proton gradient.</text>
</comment>
<comment type="catalytic activity">
    <reaction evidence="1">
        <text>a plastoquinone + NADH + (n+1) H(+)(in) = a plastoquinol + NAD(+) + n H(+)(out)</text>
        <dbReference type="Rhea" id="RHEA:42608"/>
        <dbReference type="Rhea" id="RHEA-COMP:9561"/>
        <dbReference type="Rhea" id="RHEA-COMP:9562"/>
        <dbReference type="ChEBI" id="CHEBI:15378"/>
        <dbReference type="ChEBI" id="CHEBI:17757"/>
        <dbReference type="ChEBI" id="CHEBI:57540"/>
        <dbReference type="ChEBI" id="CHEBI:57945"/>
        <dbReference type="ChEBI" id="CHEBI:62192"/>
    </reaction>
</comment>
<comment type="catalytic activity">
    <reaction evidence="1">
        <text>a plastoquinone + NADPH + (n+1) H(+)(in) = a plastoquinol + NADP(+) + n H(+)(out)</text>
        <dbReference type="Rhea" id="RHEA:42612"/>
        <dbReference type="Rhea" id="RHEA-COMP:9561"/>
        <dbReference type="Rhea" id="RHEA-COMP:9562"/>
        <dbReference type="ChEBI" id="CHEBI:15378"/>
        <dbReference type="ChEBI" id="CHEBI:17757"/>
        <dbReference type="ChEBI" id="CHEBI:57783"/>
        <dbReference type="ChEBI" id="CHEBI:58349"/>
        <dbReference type="ChEBI" id="CHEBI:62192"/>
    </reaction>
</comment>
<comment type="subunit">
    <text evidence="1">NDH is composed of at least 16 different subunits, 5 of which are encoded in the nucleus.</text>
</comment>
<comment type="subcellular location">
    <subcellularLocation>
        <location evidence="1">Plastid</location>
        <location evidence="1">Chloroplast thylakoid membrane</location>
        <topology evidence="1">Multi-pass membrane protein</topology>
    </subcellularLocation>
</comment>
<comment type="similarity">
    <text evidence="1">Belongs to the complex I subunit 4L family.</text>
</comment>
<accession>Q6L3D8</accession>
<organism>
    <name type="scientific">Saccharum hybrid</name>
    <name type="common">Sugarcane</name>
    <dbReference type="NCBI Taxonomy" id="15819"/>
    <lineage>
        <taxon>Eukaryota</taxon>
        <taxon>Viridiplantae</taxon>
        <taxon>Streptophyta</taxon>
        <taxon>Embryophyta</taxon>
        <taxon>Tracheophyta</taxon>
        <taxon>Spermatophyta</taxon>
        <taxon>Magnoliopsida</taxon>
        <taxon>Liliopsida</taxon>
        <taxon>Poales</taxon>
        <taxon>Poaceae</taxon>
        <taxon>PACMAD clade</taxon>
        <taxon>Panicoideae</taxon>
        <taxon>Andropogonodae</taxon>
        <taxon>Andropogoneae</taxon>
        <taxon>Saccharinae</taxon>
        <taxon>Saccharum</taxon>
    </lineage>
</organism>
<feature type="chain" id="PRO_0000226910" description="NAD(P)H-quinone oxidoreductase subunit 4L, chloroplastic">
    <location>
        <begin position="1"/>
        <end position="101"/>
    </location>
</feature>
<feature type="transmembrane region" description="Helical" evidence="1">
    <location>
        <begin position="2"/>
        <end position="22"/>
    </location>
</feature>
<feature type="transmembrane region" description="Helical" evidence="1">
    <location>
        <begin position="32"/>
        <end position="52"/>
    </location>
</feature>
<feature type="transmembrane region" description="Helical" evidence="1">
    <location>
        <begin position="61"/>
        <end position="81"/>
    </location>
</feature>
<name>NU4LC_SACHY</name>
<gene>
    <name evidence="1" type="primary">ndhE</name>
    <name type="ordered locus">PS044</name>
</gene>
<geneLocation type="chloroplast"/>
<keyword id="KW-0150">Chloroplast</keyword>
<keyword id="KW-0472">Membrane</keyword>
<keyword id="KW-0520">NAD</keyword>
<keyword id="KW-0521">NADP</keyword>
<keyword id="KW-0934">Plastid</keyword>
<keyword id="KW-0618">Plastoquinone</keyword>
<keyword id="KW-0874">Quinone</keyword>
<keyword id="KW-0793">Thylakoid</keyword>
<keyword id="KW-1278">Translocase</keyword>
<keyword id="KW-0812">Transmembrane</keyword>
<keyword id="KW-1133">Transmembrane helix</keyword>
<keyword id="KW-0813">Transport</keyword>
<evidence type="ECO:0000255" key="1">
    <source>
        <dbReference type="HAMAP-Rule" id="MF_01456"/>
    </source>
</evidence>